<feature type="signal peptide" evidence="1">
    <location>
        <begin position="1"/>
        <end position="25"/>
    </location>
</feature>
<feature type="chain" id="PRO_0000026823" description="Glycyl-glycine endopeptidase LytM">
    <location>
        <begin position="26"/>
        <end position="316"/>
    </location>
</feature>
<feature type="region of interest" description="Disordered" evidence="2">
    <location>
        <begin position="133"/>
        <end position="189"/>
    </location>
</feature>
<feature type="compositionally biased region" description="Polar residues" evidence="2">
    <location>
        <begin position="145"/>
        <end position="181"/>
    </location>
</feature>
<feature type="binding site" evidence="1">
    <location>
        <position position="117"/>
    </location>
    <ligand>
        <name>Zn(2+)</name>
        <dbReference type="ChEBI" id="CHEBI:29105"/>
    </ligand>
</feature>
<feature type="binding site" evidence="1">
    <location>
        <position position="210"/>
    </location>
    <ligand>
        <name>Zn(2+)</name>
        <dbReference type="ChEBI" id="CHEBI:29105"/>
    </ligand>
</feature>
<feature type="binding site" evidence="1">
    <location>
        <position position="214"/>
    </location>
    <ligand>
        <name>Zn(2+)</name>
        <dbReference type="ChEBI" id="CHEBI:29105"/>
    </ligand>
</feature>
<feature type="binding site" evidence="1">
    <location>
        <position position="293"/>
    </location>
    <ligand>
        <name>Zn(2+)</name>
        <dbReference type="ChEBI" id="CHEBI:29105"/>
    </ligand>
</feature>
<comment type="function">
    <text evidence="1">Peptidoglycan hydrolase (autolysin) specifically acting on polyglycine interpeptide bridges of the cell wall peptidoglycan.</text>
</comment>
<comment type="catalytic activity">
    <reaction>
        <text>Hydrolysis of the -Gly-|-Gly- bond in the pentaglycine inter-peptide link joining staphylococcal cell wall peptidoglycans.</text>
        <dbReference type="EC" id="3.4.24.75"/>
    </reaction>
</comment>
<comment type="cofactor">
    <cofactor evidence="1">
        <name>Zn(2+)</name>
        <dbReference type="ChEBI" id="CHEBI:29105"/>
    </cofactor>
    <text evidence="1">Binds 1 zinc ion per subunit.</text>
</comment>
<comment type="subunit">
    <text evidence="1">Monomer.</text>
</comment>
<comment type="subcellular location">
    <subcellularLocation>
        <location evidence="1">Secreted</location>
    </subcellularLocation>
</comment>
<comment type="similarity">
    <text evidence="3">Belongs to the peptidase M23B family.</text>
</comment>
<proteinExistence type="inferred from homology"/>
<evidence type="ECO:0000250" key="1"/>
<evidence type="ECO:0000256" key="2">
    <source>
        <dbReference type="SAM" id="MobiDB-lite"/>
    </source>
</evidence>
<evidence type="ECO:0000305" key="3"/>
<accession>Q6GK35</accession>
<sequence length="316" mass="34374">MKKLTAAAIATMGFATFTMAHQADAAETTNTQQAHTQMSTQSQDVSYGTYYTIDSNGDYHHTPDGNWNQAMFDNKEYSYTFVDAQGHKHYFYNCYPKNANANGSGQTYVNQATAGDNNDYTASQSQQHINQYGYQSNVGPDASYYSHSNNNQAYNSHNGNGKVNYPNGTSNQNGGSASKATASGHAKDASWLTSRKQLQPYGQYHGGGAHYGVDYAMPENSPVYSLTDGTVVQAGWSNYGGGNQVTIKEANSNNYQWYMHNNRLTVSAGDKVKAGDQIAYSGSTGNSTAPHVHFQRMSGGIGNQYAVDPTSYLQSR</sequence>
<gene>
    <name type="primary">lytM</name>
    <name type="ordered locus">SAR0273</name>
</gene>
<reference key="1">
    <citation type="journal article" date="2004" name="Proc. Natl. Acad. Sci. U.S.A.">
        <title>Complete genomes of two clinical Staphylococcus aureus strains: evidence for the rapid evolution of virulence and drug resistance.</title>
        <authorList>
            <person name="Holden M.T.G."/>
            <person name="Feil E.J."/>
            <person name="Lindsay J.A."/>
            <person name="Peacock S.J."/>
            <person name="Day N.P.J."/>
            <person name="Enright M.C."/>
            <person name="Foster T.J."/>
            <person name="Moore C.E."/>
            <person name="Hurst L."/>
            <person name="Atkin R."/>
            <person name="Barron A."/>
            <person name="Bason N."/>
            <person name="Bentley S.D."/>
            <person name="Chillingworth C."/>
            <person name="Chillingworth T."/>
            <person name="Churcher C."/>
            <person name="Clark L."/>
            <person name="Corton C."/>
            <person name="Cronin A."/>
            <person name="Doggett J."/>
            <person name="Dowd L."/>
            <person name="Feltwell T."/>
            <person name="Hance Z."/>
            <person name="Harris B."/>
            <person name="Hauser H."/>
            <person name="Holroyd S."/>
            <person name="Jagels K."/>
            <person name="James K.D."/>
            <person name="Lennard N."/>
            <person name="Line A."/>
            <person name="Mayes R."/>
            <person name="Moule S."/>
            <person name="Mungall K."/>
            <person name="Ormond D."/>
            <person name="Quail M.A."/>
            <person name="Rabbinowitsch E."/>
            <person name="Rutherford K.M."/>
            <person name="Sanders M."/>
            <person name="Sharp S."/>
            <person name="Simmonds M."/>
            <person name="Stevens K."/>
            <person name="Whitehead S."/>
            <person name="Barrell B.G."/>
            <person name="Spratt B.G."/>
            <person name="Parkhill J."/>
        </authorList>
    </citation>
    <scope>NUCLEOTIDE SEQUENCE [LARGE SCALE GENOMIC DNA]</scope>
    <source>
        <strain>MRSA252</strain>
    </source>
</reference>
<dbReference type="EC" id="3.4.24.75"/>
<dbReference type="EMBL" id="BX571856">
    <property type="protein sequence ID" value="CAG39300.1"/>
    <property type="molecule type" value="Genomic_DNA"/>
</dbReference>
<dbReference type="RefSeq" id="WP_000736790.1">
    <property type="nucleotide sequence ID" value="NC_002952.2"/>
</dbReference>
<dbReference type="SMR" id="Q6GK35"/>
<dbReference type="MEROPS" id="M23.013"/>
<dbReference type="KEGG" id="sar:SAR0273"/>
<dbReference type="HOGENOM" id="CLU_073067_0_0_9"/>
<dbReference type="Proteomes" id="UP000000596">
    <property type="component" value="Chromosome"/>
</dbReference>
<dbReference type="GO" id="GO:0005576">
    <property type="term" value="C:extracellular region"/>
    <property type="evidence" value="ECO:0007669"/>
    <property type="project" value="UniProtKB-SubCell"/>
</dbReference>
<dbReference type="GO" id="GO:0046872">
    <property type="term" value="F:metal ion binding"/>
    <property type="evidence" value="ECO:0007669"/>
    <property type="project" value="UniProtKB-KW"/>
</dbReference>
<dbReference type="GO" id="GO:0004222">
    <property type="term" value="F:metalloendopeptidase activity"/>
    <property type="evidence" value="ECO:0007669"/>
    <property type="project" value="TreeGrafter"/>
</dbReference>
<dbReference type="GO" id="GO:0071555">
    <property type="term" value="P:cell wall organization"/>
    <property type="evidence" value="ECO:0007669"/>
    <property type="project" value="UniProtKB-KW"/>
</dbReference>
<dbReference type="GO" id="GO:0006508">
    <property type="term" value="P:proteolysis"/>
    <property type="evidence" value="ECO:0007669"/>
    <property type="project" value="UniProtKB-KW"/>
</dbReference>
<dbReference type="CDD" id="cd12797">
    <property type="entry name" value="M23_peptidase"/>
    <property type="match status" value="1"/>
</dbReference>
<dbReference type="FunFam" id="2.70.70.10:FF:000027">
    <property type="entry name" value="Glycyl-glycine endopeptidase LytM"/>
    <property type="match status" value="1"/>
</dbReference>
<dbReference type="Gene3D" id="2.40.50.290">
    <property type="match status" value="1"/>
</dbReference>
<dbReference type="Gene3D" id="2.70.70.10">
    <property type="entry name" value="Glucose Permease (Domain IIA)"/>
    <property type="match status" value="1"/>
</dbReference>
<dbReference type="InterPro" id="IPR050570">
    <property type="entry name" value="Cell_wall_metabolism_enzyme"/>
</dbReference>
<dbReference type="InterPro" id="IPR011055">
    <property type="entry name" value="Dup_hybrid_motif"/>
</dbReference>
<dbReference type="InterPro" id="IPR016047">
    <property type="entry name" value="Peptidase_M23"/>
</dbReference>
<dbReference type="PANTHER" id="PTHR21666:SF270">
    <property type="entry name" value="MUREIN HYDROLASE ACTIVATOR ENVC"/>
    <property type="match status" value="1"/>
</dbReference>
<dbReference type="PANTHER" id="PTHR21666">
    <property type="entry name" value="PEPTIDASE-RELATED"/>
    <property type="match status" value="1"/>
</dbReference>
<dbReference type="Pfam" id="PF01551">
    <property type="entry name" value="Peptidase_M23"/>
    <property type="match status" value="1"/>
</dbReference>
<dbReference type="SUPFAM" id="SSF51261">
    <property type="entry name" value="Duplicated hybrid motif"/>
    <property type="match status" value="1"/>
</dbReference>
<organism>
    <name type="scientific">Staphylococcus aureus (strain MRSA252)</name>
    <dbReference type="NCBI Taxonomy" id="282458"/>
    <lineage>
        <taxon>Bacteria</taxon>
        <taxon>Bacillati</taxon>
        <taxon>Bacillota</taxon>
        <taxon>Bacilli</taxon>
        <taxon>Bacillales</taxon>
        <taxon>Staphylococcaceae</taxon>
        <taxon>Staphylococcus</taxon>
    </lineage>
</organism>
<protein>
    <recommendedName>
        <fullName>Glycyl-glycine endopeptidase LytM</fullName>
        <ecNumber>3.4.24.75</ecNumber>
    </recommendedName>
    <alternativeName>
        <fullName>Autolysin LytM</fullName>
    </alternativeName>
</protein>
<name>LYTM_STAAR</name>
<keyword id="KW-0961">Cell wall biogenesis/degradation</keyword>
<keyword id="KW-0378">Hydrolase</keyword>
<keyword id="KW-0479">Metal-binding</keyword>
<keyword id="KW-0482">Metalloprotease</keyword>
<keyword id="KW-0645">Protease</keyword>
<keyword id="KW-0964">Secreted</keyword>
<keyword id="KW-0732">Signal</keyword>
<keyword id="KW-0843">Virulence</keyword>
<keyword id="KW-0862">Zinc</keyword>
<keyword id="KW-0865">Zymogen</keyword>